<feature type="chain" id="PRO_1000136170" description="D-cysteine desulfhydrase">
    <location>
        <begin position="1"/>
        <end position="328"/>
    </location>
</feature>
<feature type="modified residue" description="N6-(pyridoxal phosphate)lysine" evidence="1">
    <location>
        <position position="51"/>
    </location>
</feature>
<name>DCYD_SALNS</name>
<reference key="1">
    <citation type="journal article" date="2011" name="J. Bacteriol.">
        <title>Comparative genomics of 28 Salmonella enterica isolates: evidence for CRISPR-mediated adaptive sublineage evolution.</title>
        <authorList>
            <person name="Fricke W.F."/>
            <person name="Mammel M.K."/>
            <person name="McDermott P.F."/>
            <person name="Tartera C."/>
            <person name="White D.G."/>
            <person name="Leclerc J.E."/>
            <person name="Ravel J."/>
            <person name="Cebula T.A."/>
        </authorList>
    </citation>
    <scope>NUCLEOTIDE SEQUENCE [LARGE SCALE GENOMIC DNA]</scope>
    <source>
        <strain>SL254</strain>
    </source>
</reference>
<proteinExistence type="inferred from homology"/>
<evidence type="ECO:0000255" key="1">
    <source>
        <dbReference type="HAMAP-Rule" id="MF_01045"/>
    </source>
</evidence>
<keyword id="KW-0456">Lyase</keyword>
<keyword id="KW-0663">Pyridoxal phosphate</keyword>
<dbReference type="EC" id="4.4.1.15" evidence="1"/>
<dbReference type="EMBL" id="CP001113">
    <property type="protein sequence ID" value="ACF64770.1"/>
    <property type="molecule type" value="Genomic_DNA"/>
</dbReference>
<dbReference type="RefSeq" id="WP_001128188.1">
    <property type="nucleotide sequence ID" value="NZ_CCMR01000003.1"/>
</dbReference>
<dbReference type="SMR" id="B4SW60"/>
<dbReference type="KEGG" id="see:SNSL254_A2115"/>
<dbReference type="HOGENOM" id="CLU_048897_1_0_6"/>
<dbReference type="Proteomes" id="UP000008824">
    <property type="component" value="Chromosome"/>
</dbReference>
<dbReference type="GO" id="GO:0019148">
    <property type="term" value="F:D-cysteine desulfhydrase activity"/>
    <property type="evidence" value="ECO:0007669"/>
    <property type="project" value="UniProtKB-UniRule"/>
</dbReference>
<dbReference type="GO" id="GO:0046416">
    <property type="term" value="P:D-amino acid metabolic process"/>
    <property type="evidence" value="ECO:0007669"/>
    <property type="project" value="UniProtKB-UniRule"/>
</dbReference>
<dbReference type="CDD" id="cd06449">
    <property type="entry name" value="ACCD"/>
    <property type="match status" value="1"/>
</dbReference>
<dbReference type="FunFam" id="3.40.50.1100:FF:000019">
    <property type="entry name" value="D-cysteine desulfhydrase"/>
    <property type="match status" value="1"/>
</dbReference>
<dbReference type="Gene3D" id="3.40.50.1100">
    <property type="match status" value="2"/>
</dbReference>
<dbReference type="HAMAP" id="MF_01045">
    <property type="entry name" value="D_Cys_desulfhydr"/>
    <property type="match status" value="1"/>
</dbReference>
<dbReference type="InterPro" id="IPR027278">
    <property type="entry name" value="ACCD_DCysDesulf"/>
</dbReference>
<dbReference type="InterPro" id="IPR005966">
    <property type="entry name" value="D-Cys_desShydrase"/>
</dbReference>
<dbReference type="InterPro" id="IPR023702">
    <property type="entry name" value="D_Cys_desulphydr_bac"/>
</dbReference>
<dbReference type="InterPro" id="IPR001926">
    <property type="entry name" value="TrpB-like_PALP"/>
</dbReference>
<dbReference type="InterPro" id="IPR036052">
    <property type="entry name" value="TrpB-like_PALP_sf"/>
</dbReference>
<dbReference type="NCBIfam" id="TIGR01275">
    <property type="entry name" value="ACC_deam_rel"/>
    <property type="match status" value="1"/>
</dbReference>
<dbReference type="NCBIfam" id="NF003029">
    <property type="entry name" value="PRK03910.1-1"/>
    <property type="match status" value="1"/>
</dbReference>
<dbReference type="NCBIfam" id="NF003030">
    <property type="entry name" value="PRK03910.1-3"/>
    <property type="match status" value="1"/>
</dbReference>
<dbReference type="NCBIfam" id="NF003032">
    <property type="entry name" value="PRK03910.1-5"/>
    <property type="match status" value="1"/>
</dbReference>
<dbReference type="PANTHER" id="PTHR43780">
    <property type="entry name" value="1-AMINOCYCLOPROPANE-1-CARBOXYLATE DEAMINASE-RELATED"/>
    <property type="match status" value="1"/>
</dbReference>
<dbReference type="PANTHER" id="PTHR43780:SF2">
    <property type="entry name" value="1-AMINOCYCLOPROPANE-1-CARBOXYLATE DEAMINASE-RELATED"/>
    <property type="match status" value="1"/>
</dbReference>
<dbReference type="Pfam" id="PF00291">
    <property type="entry name" value="PALP"/>
    <property type="match status" value="1"/>
</dbReference>
<dbReference type="PIRSF" id="PIRSF006278">
    <property type="entry name" value="ACCD_DCysDesulf"/>
    <property type="match status" value="1"/>
</dbReference>
<dbReference type="SUPFAM" id="SSF53686">
    <property type="entry name" value="Tryptophan synthase beta subunit-like PLP-dependent enzymes"/>
    <property type="match status" value="1"/>
</dbReference>
<accession>B4SW60</accession>
<protein>
    <recommendedName>
        <fullName evidence="1">D-cysteine desulfhydrase</fullName>
        <ecNumber evidence="1">4.4.1.15</ecNumber>
    </recommendedName>
</protein>
<comment type="function">
    <text evidence="1">Catalyzes the alpha,beta-elimination reaction of D-cysteine and of several D-cysteine derivatives. It could be a defense mechanism against D-cysteine.</text>
</comment>
<comment type="catalytic activity">
    <reaction evidence="1">
        <text>D-cysteine + H2O = hydrogen sulfide + pyruvate + NH4(+) + H(+)</text>
        <dbReference type="Rhea" id="RHEA:11268"/>
        <dbReference type="ChEBI" id="CHEBI:15361"/>
        <dbReference type="ChEBI" id="CHEBI:15377"/>
        <dbReference type="ChEBI" id="CHEBI:15378"/>
        <dbReference type="ChEBI" id="CHEBI:28938"/>
        <dbReference type="ChEBI" id="CHEBI:29919"/>
        <dbReference type="ChEBI" id="CHEBI:35236"/>
        <dbReference type="EC" id="4.4.1.15"/>
    </reaction>
</comment>
<comment type="cofactor">
    <cofactor evidence="1">
        <name>pyridoxal 5'-phosphate</name>
        <dbReference type="ChEBI" id="CHEBI:597326"/>
    </cofactor>
</comment>
<comment type="subunit">
    <text evidence="1">Homodimer.</text>
</comment>
<comment type="similarity">
    <text evidence="1">Belongs to the ACC deaminase/D-cysteine desulfhydrase family.</text>
</comment>
<sequence length="328" mass="34877">MPLHHLTRFPRLELIGAPTPLEYLPRLSDYLGREIYIKRDDVTPIAMGGNKLRKLEFLVADALREGADTLITAGAIQSNHVRQTAAVAAKLGLHCVALLENPIGTTAENYLTNGNRLLLDLFNTQIEMCDALTDPDAQLQTLATRIEAQGFRPYVIPVGGSSALGAMGYVESALEIAQQCEEVVGLSSVVVASGSAGTHAGLAVGLEHLMPDVELIGVTVSRSVAEQKPKVIALQQAIAGQLALTATADIHLWDDYFAPGYGVPNDAGMEAVKLLASLEGVLLDPVYTGKAMAGLIDGISQKRFNDDGPILFIHTGGAPALFAYHPHV</sequence>
<gene>
    <name evidence="1" type="primary">dcyD</name>
    <name type="ordered locus">SNSL254_A2115</name>
</gene>
<organism>
    <name type="scientific">Salmonella newport (strain SL254)</name>
    <dbReference type="NCBI Taxonomy" id="423368"/>
    <lineage>
        <taxon>Bacteria</taxon>
        <taxon>Pseudomonadati</taxon>
        <taxon>Pseudomonadota</taxon>
        <taxon>Gammaproteobacteria</taxon>
        <taxon>Enterobacterales</taxon>
        <taxon>Enterobacteriaceae</taxon>
        <taxon>Salmonella</taxon>
    </lineage>
</organism>